<proteinExistence type="evidence at protein level"/>
<accession>P22396</accession>
<protein>
    <recommendedName>
        <fullName>Locustamyotropin-2</fullName>
    </recommendedName>
    <alternativeName>
        <fullName>Lom-MT-2</fullName>
    </alternativeName>
</protein>
<sequence>EGDFTPRL</sequence>
<keyword id="KW-0027">Amidation</keyword>
<keyword id="KW-0903">Direct protein sequencing</keyword>
<keyword id="KW-0527">Neuropeptide</keyword>
<keyword id="KW-0964">Secreted</keyword>
<feature type="peptide" id="PRO_0000044314" description="Locustamyotropin-2">
    <location>
        <begin position="1"/>
        <end position="8"/>
    </location>
</feature>
<feature type="modified residue" description="Leucine amide" evidence="1">
    <location>
        <position position="8"/>
    </location>
</feature>
<dbReference type="GO" id="GO:0005576">
    <property type="term" value="C:extracellular region"/>
    <property type="evidence" value="ECO:0007669"/>
    <property type="project" value="UniProtKB-SubCell"/>
</dbReference>
<dbReference type="GO" id="GO:0007218">
    <property type="term" value="P:neuropeptide signaling pathway"/>
    <property type="evidence" value="ECO:0007669"/>
    <property type="project" value="UniProtKB-KW"/>
</dbReference>
<dbReference type="PROSITE" id="PS00539">
    <property type="entry name" value="PYROKININ"/>
    <property type="match status" value="1"/>
</dbReference>
<reference key="1">
    <citation type="journal article" date="1990" name="Insect Biochem.">
        <title>Isolation, identification and synthesis of locustamyotropin II, an additional neuropeptide of Locusta migratoria. Member of the cephalomyotropic peptide family.</title>
        <authorList>
            <person name="Schoofs L."/>
            <person name="Holman G.M."/>
            <person name="Hayes T.K."/>
            <person name="Nachman R.J."/>
            <person name="de Loof A."/>
        </authorList>
    </citation>
    <scope>PROTEIN SEQUENCE</scope>
    <scope>AMIDATION AT LEU-8</scope>
    <scope>FUNCTION</scope>
    <source>
        <tissue>Corpora cardiaca</tissue>
    </source>
</reference>
<name>LMT2_LOCMI</name>
<organism>
    <name type="scientific">Locusta migratoria</name>
    <name type="common">Migratory locust</name>
    <dbReference type="NCBI Taxonomy" id="7004"/>
    <lineage>
        <taxon>Eukaryota</taxon>
        <taxon>Metazoa</taxon>
        <taxon>Ecdysozoa</taxon>
        <taxon>Arthropoda</taxon>
        <taxon>Hexapoda</taxon>
        <taxon>Insecta</taxon>
        <taxon>Pterygota</taxon>
        <taxon>Neoptera</taxon>
        <taxon>Polyneoptera</taxon>
        <taxon>Orthoptera</taxon>
        <taxon>Caelifera</taxon>
        <taxon>Acrididea</taxon>
        <taxon>Acridomorpha</taxon>
        <taxon>Acridoidea</taxon>
        <taxon>Acrididae</taxon>
        <taxon>Oedipodinae</taxon>
        <taxon>Locusta</taxon>
    </lineage>
</organism>
<evidence type="ECO:0000269" key="1">
    <source ref="1"/>
</evidence>
<evidence type="ECO:0000305" key="2"/>
<comment type="function">
    <text evidence="1">Mediates visceral muscle contractile activity (myotropic activity).</text>
</comment>
<comment type="subcellular location">
    <subcellularLocation>
        <location>Secreted</location>
    </subcellularLocation>
</comment>
<comment type="similarity">
    <text evidence="2">Belongs to the pyrokinin family.</text>
</comment>